<keyword id="KW-0010">Activator</keyword>
<keyword id="KW-0025">Alternative splicing</keyword>
<keyword id="KW-1017">Isopeptide bond</keyword>
<keyword id="KW-0479">Metal-binding</keyword>
<keyword id="KW-0539">Nucleus</keyword>
<keyword id="KW-0597">Phosphoprotein</keyword>
<keyword id="KW-1267">Proteomics identification</keyword>
<keyword id="KW-1185">Reference proteome</keyword>
<keyword id="KW-0677">Repeat</keyword>
<keyword id="KW-0804">Transcription</keyword>
<keyword id="KW-0805">Transcription regulation</keyword>
<keyword id="KW-0832">Ubl conjugation</keyword>
<keyword id="KW-0862">Zinc</keyword>
<keyword id="KW-0863">Zinc-finger</keyword>
<evidence type="ECO:0000255" key="1">
    <source>
        <dbReference type="PROSITE-ProRule" id="PRU00042"/>
    </source>
</evidence>
<evidence type="ECO:0000256" key="2">
    <source>
        <dbReference type="SAM" id="MobiDB-lite"/>
    </source>
</evidence>
<evidence type="ECO:0000269" key="3">
    <source>
    </source>
</evidence>
<evidence type="ECO:0000269" key="4">
    <source>
    </source>
</evidence>
<evidence type="ECO:0000269" key="5">
    <source>
    </source>
</evidence>
<evidence type="ECO:0000269" key="6">
    <source>
    </source>
</evidence>
<evidence type="ECO:0000303" key="7">
    <source>
    </source>
</evidence>
<evidence type="ECO:0000303" key="8">
    <source>
    </source>
</evidence>
<evidence type="ECO:0000303" key="9">
    <source>
    </source>
</evidence>
<evidence type="ECO:0000305" key="10"/>
<evidence type="ECO:0007744" key="11">
    <source>
    </source>
</evidence>
<evidence type="ECO:0007744" key="12">
    <source>
    </source>
</evidence>
<dbReference type="EMBL" id="AY936556">
    <property type="protein sequence ID" value="AAX23974.1"/>
    <property type="molecule type" value="mRNA"/>
</dbReference>
<dbReference type="EMBL" id="FJ980275">
    <property type="protein sequence ID" value="ACR56328.1"/>
    <property type="molecule type" value="mRNA"/>
</dbReference>
<dbReference type="EMBL" id="DQ079590">
    <property type="protein sequence ID" value="AAZ30918.1"/>
    <property type="molecule type" value="mRNA"/>
</dbReference>
<dbReference type="EMBL" id="AC024558">
    <property type="status" value="NOT_ANNOTATED_CDS"/>
    <property type="molecule type" value="Genomic_DNA"/>
</dbReference>
<dbReference type="EMBL" id="AC073439">
    <property type="status" value="NOT_ANNOTATED_CDS"/>
    <property type="molecule type" value="Genomic_DNA"/>
</dbReference>
<dbReference type="EMBL" id="AK092101">
    <property type="protein sequence ID" value="BAC03805.1"/>
    <property type="status" value="ALT_INIT"/>
    <property type="molecule type" value="mRNA"/>
</dbReference>
<dbReference type="EMBL" id="BC002940">
    <property type="protein sequence ID" value="AAH02940.2"/>
    <property type="molecule type" value="mRNA"/>
</dbReference>
<dbReference type="EMBL" id="BC012729">
    <property type="protein sequence ID" value="AAH12729.2"/>
    <property type="molecule type" value="mRNA"/>
</dbReference>
<dbReference type="EMBL" id="BC073859">
    <property type="protein sequence ID" value="AAH73859.1"/>
    <property type="molecule type" value="mRNA"/>
</dbReference>
<dbReference type="CCDS" id="CCDS43145.1">
    <molecule id="Q2QGD7-1"/>
</dbReference>
<dbReference type="CCDS" id="CCDS43146.1">
    <molecule id="Q2QGD7-2"/>
</dbReference>
<dbReference type="RefSeq" id="NP_001035743.1">
    <molecule id="Q2QGD7-2"/>
    <property type="nucleotide sequence ID" value="NM_001040653.4"/>
</dbReference>
<dbReference type="RefSeq" id="NP_079388.3">
    <molecule id="Q2QGD7-1"/>
    <property type="nucleotide sequence ID" value="NM_025112.4"/>
</dbReference>
<dbReference type="SMR" id="Q2QGD7"/>
<dbReference type="BioGRID" id="122653">
    <property type="interactions" value="28"/>
</dbReference>
<dbReference type="FunCoup" id="Q2QGD7">
    <property type="interactions" value="837"/>
</dbReference>
<dbReference type="IntAct" id="Q2QGD7">
    <property type="interactions" value="34"/>
</dbReference>
<dbReference type="MINT" id="Q2QGD7"/>
<dbReference type="STRING" id="9606.ENSP00000374359"/>
<dbReference type="GlyGen" id="Q2QGD7">
    <property type="glycosylation" value="2 sites, 1 O-linked glycan (1 site)"/>
</dbReference>
<dbReference type="iPTMnet" id="Q2QGD7"/>
<dbReference type="PhosphoSitePlus" id="Q2QGD7"/>
<dbReference type="BioMuta" id="ZXDC"/>
<dbReference type="DMDM" id="296453026"/>
<dbReference type="jPOST" id="Q2QGD7"/>
<dbReference type="MassIVE" id="Q2QGD7"/>
<dbReference type="PaxDb" id="9606-ENSP00000374359"/>
<dbReference type="PeptideAtlas" id="Q2QGD7"/>
<dbReference type="ProteomicsDB" id="61437">
    <molecule id="Q2QGD7-1"/>
</dbReference>
<dbReference type="ProteomicsDB" id="61438">
    <molecule id="Q2QGD7-2"/>
</dbReference>
<dbReference type="Pumba" id="Q2QGD7"/>
<dbReference type="Antibodypedia" id="33073">
    <property type="antibodies" value="107 antibodies from 21 providers"/>
</dbReference>
<dbReference type="DNASU" id="79364"/>
<dbReference type="Ensembl" id="ENST00000336332.5">
    <molecule id="Q2QGD7-2"/>
    <property type="protein sequence ID" value="ENSP00000337694.5"/>
    <property type="gene ID" value="ENSG00000070476.15"/>
</dbReference>
<dbReference type="Ensembl" id="ENST00000389709.8">
    <molecule id="Q2QGD7-1"/>
    <property type="protein sequence ID" value="ENSP00000374359.3"/>
    <property type="gene ID" value="ENSG00000070476.15"/>
</dbReference>
<dbReference type="GeneID" id="79364"/>
<dbReference type="KEGG" id="hsa:79364"/>
<dbReference type="MANE-Select" id="ENST00000389709.8">
    <property type="protein sequence ID" value="ENSP00000374359.3"/>
    <property type="RefSeq nucleotide sequence ID" value="NM_025112.5"/>
    <property type="RefSeq protein sequence ID" value="NP_079388.3"/>
</dbReference>
<dbReference type="UCSC" id="uc003eiv.3">
    <molecule id="Q2QGD7-1"/>
    <property type="organism name" value="human"/>
</dbReference>
<dbReference type="AGR" id="HGNC:28160"/>
<dbReference type="CTD" id="79364"/>
<dbReference type="GeneCards" id="ZXDC"/>
<dbReference type="HGNC" id="HGNC:28160">
    <property type="gene designation" value="ZXDC"/>
</dbReference>
<dbReference type="HPA" id="ENSG00000070476">
    <property type="expression patterns" value="Tissue enhanced (bone)"/>
</dbReference>
<dbReference type="MIM" id="615746">
    <property type="type" value="gene"/>
</dbReference>
<dbReference type="neXtProt" id="NX_Q2QGD7"/>
<dbReference type="OpenTargets" id="ENSG00000070476"/>
<dbReference type="PharmGKB" id="PA142670466"/>
<dbReference type="VEuPathDB" id="HostDB:ENSG00000070476"/>
<dbReference type="eggNOG" id="KOG1721">
    <property type="taxonomic scope" value="Eukaryota"/>
</dbReference>
<dbReference type="GeneTree" id="ENSGT00940000162216"/>
<dbReference type="HOGENOM" id="CLU_007312_0_0_1"/>
<dbReference type="InParanoid" id="Q2QGD7"/>
<dbReference type="OMA" id="TGVQCIQ"/>
<dbReference type="OrthoDB" id="6277246at2759"/>
<dbReference type="PAN-GO" id="Q2QGD7">
    <property type="GO annotations" value="3 GO annotations based on evolutionary models"/>
</dbReference>
<dbReference type="PhylomeDB" id="Q2QGD7"/>
<dbReference type="TreeFam" id="TF330996"/>
<dbReference type="PathwayCommons" id="Q2QGD7"/>
<dbReference type="SignaLink" id="Q2QGD7"/>
<dbReference type="SIGNOR" id="Q2QGD7"/>
<dbReference type="BioGRID-ORCS" id="79364">
    <property type="hits" value="18 hits in 1178 CRISPR screens"/>
</dbReference>
<dbReference type="ChiTaRS" id="ZXDC">
    <property type="organism name" value="human"/>
</dbReference>
<dbReference type="GenomeRNAi" id="79364"/>
<dbReference type="Pharos" id="Q2QGD7">
    <property type="development level" value="Tbio"/>
</dbReference>
<dbReference type="PRO" id="PR:Q2QGD7"/>
<dbReference type="Proteomes" id="UP000005640">
    <property type="component" value="Chromosome 3"/>
</dbReference>
<dbReference type="RNAct" id="Q2QGD7">
    <property type="molecule type" value="protein"/>
</dbReference>
<dbReference type="Bgee" id="ENSG00000070476">
    <property type="expression patterns" value="Expressed in gastrocnemius and 189 other cell types or tissues"/>
</dbReference>
<dbReference type="ExpressionAtlas" id="Q2QGD7">
    <property type="expression patterns" value="baseline and differential"/>
</dbReference>
<dbReference type="GO" id="GO:0005634">
    <property type="term" value="C:nucleus"/>
    <property type="evidence" value="ECO:0000318"/>
    <property type="project" value="GO_Central"/>
</dbReference>
<dbReference type="GO" id="GO:0070742">
    <property type="term" value="F:C2H2 zinc finger domain binding"/>
    <property type="evidence" value="ECO:0000353"/>
    <property type="project" value="UniProtKB"/>
</dbReference>
<dbReference type="GO" id="GO:0030275">
    <property type="term" value="F:LRR domain binding"/>
    <property type="evidence" value="ECO:0000353"/>
    <property type="project" value="UniProtKB"/>
</dbReference>
<dbReference type="GO" id="GO:0003713">
    <property type="term" value="F:transcription coactivator activity"/>
    <property type="evidence" value="ECO:0000315"/>
    <property type="project" value="GO_Central"/>
</dbReference>
<dbReference type="GO" id="GO:0003712">
    <property type="term" value="F:transcription coregulator activity"/>
    <property type="evidence" value="ECO:0000318"/>
    <property type="project" value="GO_Central"/>
</dbReference>
<dbReference type="GO" id="GO:0008270">
    <property type="term" value="F:zinc ion binding"/>
    <property type="evidence" value="ECO:0007669"/>
    <property type="project" value="UniProtKB-KW"/>
</dbReference>
<dbReference type="GO" id="GO:0045893">
    <property type="term" value="P:positive regulation of DNA-templated transcription"/>
    <property type="evidence" value="ECO:0000314"/>
    <property type="project" value="UniProtKB"/>
</dbReference>
<dbReference type="GO" id="GO:0006357">
    <property type="term" value="P:regulation of transcription by RNA polymerase II"/>
    <property type="evidence" value="ECO:0000318"/>
    <property type="project" value="GO_Central"/>
</dbReference>
<dbReference type="FunFam" id="3.30.160.60:FF:000543">
    <property type="entry name" value="Zinc finger protein 384 like"/>
    <property type="match status" value="1"/>
</dbReference>
<dbReference type="FunFam" id="3.30.160.60:FF:000872">
    <property type="entry name" value="zinc finger X-linked protein ZXDB"/>
    <property type="match status" value="1"/>
</dbReference>
<dbReference type="FunFam" id="3.30.160.60:FF:000257">
    <property type="entry name" value="ZXD family zinc finger C"/>
    <property type="match status" value="3"/>
</dbReference>
<dbReference type="FunFam" id="3.30.160.60:FF:000499">
    <property type="entry name" value="ZXD family zinc finger C"/>
    <property type="match status" value="1"/>
</dbReference>
<dbReference type="FunFam" id="3.30.160.60:FF:001192">
    <property type="entry name" value="ZXD family zinc finger C"/>
    <property type="match status" value="1"/>
</dbReference>
<dbReference type="Gene3D" id="3.30.160.60">
    <property type="entry name" value="Classic Zinc Finger"/>
    <property type="match status" value="8"/>
</dbReference>
<dbReference type="InterPro" id="IPR051061">
    <property type="entry name" value="Zinc_finger_trans_reg"/>
</dbReference>
<dbReference type="InterPro" id="IPR036236">
    <property type="entry name" value="Znf_C2H2_sf"/>
</dbReference>
<dbReference type="InterPro" id="IPR013087">
    <property type="entry name" value="Znf_C2H2_type"/>
</dbReference>
<dbReference type="PANTHER" id="PTHR46179">
    <property type="entry name" value="ZINC FINGER PROTEIN"/>
    <property type="match status" value="1"/>
</dbReference>
<dbReference type="PANTHER" id="PTHR46179:SF5">
    <property type="entry name" value="ZINC FINGER PROTEIN ZXDC"/>
    <property type="match status" value="1"/>
</dbReference>
<dbReference type="Pfam" id="PF00096">
    <property type="entry name" value="zf-C2H2"/>
    <property type="match status" value="4"/>
</dbReference>
<dbReference type="SMART" id="SM00355">
    <property type="entry name" value="ZnF_C2H2"/>
    <property type="match status" value="10"/>
</dbReference>
<dbReference type="SUPFAM" id="SSF57667">
    <property type="entry name" value="beta-beta-alpha zinc fingers"/>
    <property type="match status" value="5"/>
</dbReference>
<dbReference type="PROSITE" id="PS00028">
    <property type="entry name" value="ZINC_FINGER_C2H2_1"/>
    <property type="match status" value="10"/>
</dbReference>
<dbReference type="PROSITE" id="PS50157">
    <property type="entry name" value="ZINC_FINGER_C2H2_2"/>
    <property type="match status" value="10"/>
</dbReference>
<comment type="function">
    <text evidence="3 4 5">Cooperates with CIITA to promote transcription of MHC class I and MHC class II genes.</text>
</comment>
<comment type="subunit">
    <text evidence="3 4">Self-associates. Interacts with ZXDA and CIITA.</text>
</comment>
<comment type="interaction">
    <interactant intactId="EBI-1538838">
        <id>Q2QGD7</id>
    </interactant>
    <interactant intactId="EBI-930964">
        <id>P54253</id>
        <label>ATXN1</label>
    </interactant>
    <organismsDiffer>false</organismsDiffer>
    <experiments>7</experiments>
</comment>
<comment type="interaction">
    <interactant intactId="EBI-1538838">
        <id>Q2QGD7</id>
    </interactant>
    <interactant intactId="EBI-10988864">
        <id>P46379-2</id>
        <label>BAG6</label>
    </interactant>
    <organismsDiffer>false</organismsDiffer>
    <experiments>3</experiments>
</comment>
<comment type="interaction">
    <interactant intactId="EBI-1538838">
        <id>Q2QGD7</id>
    </interactant>
    <interactant intactId="EBI-10897344">
        <id>Q8N4T8</id>
        <label>CBR4</label>
    </interactant>
    <organismsDiffer>false</organismsDiffer>
    <experiments>3</experiments>
</comment>
<comment type="interaction">
    <interactant intactId="EBI-1538838">
        <id>Q2QGD7</id>
    </interactant>
    <interactant intactId="EBI-1538819">
        <id>P33076</id>
        <label>CIITA</label>
    </interactant>
    <organismsDiffer>false</organismsDiffer>
    <experiments>6</experiments>
</comment>
<comment type="interaction">
    <interactant intactId="EBI-1538838">
        <id>Q2QGD7</id>
    </interactant>
    <interactant intactId="EBI-395638">
        <id>O14645</id>
        <label>DNALI1</label>
    </interactant>
    <organismsDiffer>false</organismsDiffer>
    <experiments>3</experiments>
</comment>
<comment type="interaction">
    <interactant intactId="EBI-1538838">
        <id>Q2QGD7</id>
    </interactant>
    <interactant intactId="EBI-352682">
        <id>P04792</id>
        <label>HSPB1</label>
    </interactant>
    <organismsDiffer>false</organismsDiffer>
    <experiments>3</experiments>
</comment>
<comment type="interaction">
    <interactant intactId="EBI-1538838">
        <id>Q2QGD7</id>
    </interactant>
    <interactant intactId="EBI-466029">
        <id>P42858</id>
        <label>HTT</label>
    </interactant>
    <organismsDiffer>false</organismsDiffer>
    <experiments>3</experiments>
</comment>
<comment type="interaction">
    <interactant intactId="EBI-1538838">
        <id>Q2QGD7</id>
    </interactant>
    <interactant intactId="EBI-10975473">
        <id>O60333-2</id>
        <label>KIF1B</label>
    </interactant>
    <organismsDiffer>false</organismsDiffer>
    <experiments>3</experiments>
</comment>
<comment type="interaction">
    <interactant intactId="EBI-1538838">
        <id>Q2QGD7</id>
    </interactant>
    <interactant intactId="EBI-948266">
        <id>O14901</id>
        <label>KLF11</label>
    </interactant>
    <organismsDiffer>false</organismsDiffer>
    <experiments>3</experiments>
</comment>
<comment type="interaction">
    <interactant intactId="EBI-1538838">
        <id>Q2QGD7</id>
    </interactant>
    <interactant intactId="EBI-1753293">
        <id>Q9NQ76</id>
        <label>MEPE</label>
    </interactant>
    <organismsDiffer>false</organismsDiffer>
    <experiments>3</experiments>
</comment>
<comment type="interaction">
    <interactant intactId="EBI-1538838">
        <id>Q2QGD7</id>
    </interactant>
    <interactant intactId="EBI-50433196">
        <id>A0A6Q8PF08</id>
        <label>PMP22</label>
    </interactant>
    <organismsDiffer>false</organismsDiffer>
    <experiments>3</experiments>
</comment>
<comment type="interaction">
    <interactant intactId="EBI-1538838">
        <id>Q2QGD7</id>
    </interactant>
    <interactant intactId="EBI-1389308">
        <id>Q7Z3K3</id>
        <label>POGZ</label>
    </interactant>
    <organismsDiffer>false</organismsDiffer>
    <experiments>4</experiments>
</comment>
<comment type="interaction">
    <interactant intactId="EBI-1538838">
        <id>Q2QGD7</id>
    </interactant>
    <interactant intactId="EBI-749195">
        <id>P60891</id>
        <label>PRPS1</label>
    </interactant>
    <organismsDiffer>false</organismsDiffer>
    <experiments>3</experiments>
</comment>
<comment type="interaction">
    <interactant intactId="EBI-1538838">
        <id>Q2QGD7</id>
    </interactant>
    <interactant intactId="EBI-2010251">
        <id>P49810</id>
        <label>PSEN2</label>
    </interactant>
    <organismsDiffer>false</organismsDiffer>
    <experiments>3</experiments>
</comment>
<comment type="interaction">
    <interactant intactId="EBI-1538838">
        <id>Q2QGD7</id>
    </interactant>
    <interactant intactId="EBI-396669">
        <id>Q9Y3C5</id>
        <label>RNF11</label>
    </interactant>
    <organismsDiffer>false</organismsDiffer>
    <experiments>3</experiments>
</comment>
<comment type="interaction">
    <interactant intactId="EBI-1538838">
        <id>Q2QGD7</id>
    </interactant>
    <interactant intactId="EBI-990792">
        <id>P00441</id>
        <label>SOD1</label>
    </interactant>
    <organismsDiffer>false</organismsDiffer>
    <experiments>3</experiments>
</comment>
<comment type="interaction">
    <interactant intactId="EBI-1538838">
        <id>Q2QGD7</id>
    </interactant>
    <interactant intactId="EBI-3921347">
        <id>P51687</id>
        <label>SUOX</label>
    </interactant>
    <organismsDiffer>false</organismsDiffer>
    <experiments>3</experiments>
</comment>
<comment type="interaction">
    <interactant intactId="EBI-1538838">
        <id>Q2QGD7</id>
    </interactant>
    <interactant intactId="EBI-711909">
        <id>P02766</id>
        <label>TTR</label>
    </interactant>
    <organismsDiffer>false</organismsDiffer>
    <experiments>3</experiments>
</comment>
<comment type="interaction">
    <interactant intactId="EBI-1538838">
        <id>Q2QGD7</id>
    </interactant>
    <interactant intactId="EBI-540834">
        <id>P61964</id>
        <label>WDR5</label>
    </interactant>
    <organismsDiffer>false</organismsDiffer>
    <experiments>6</experiments>
</comment>
<comment type="interaction">
    <interactant intactId="EBI-1538838">
        <id>Q2QGD7</id>
    </interactant>
    <interactant intactId="EBI-720609">
        <id>O76024</id>
        <label>WFS1</label>
    </interactant>
    <organismsDiffer>false</organismsDiffer>
    <experiments>3</experiments>
</comment>
<comment type="interaction">
    <interactant intactId="EBI-1538838">
        <id>Q2QGD7</id>
    </interactant>
    <interactant intactId="EBI-746595">
        <id>Q96E35</id>
        <label>ZMYND19</label>
    </interactant>
    <organismsDiffer>false</organismsDiffer>
    <experiments>3</experiments>
</comment>
<comment type="interaction">
    <interactant intactId="EBI-1538838">
        <id>Q2QGD7</id>
    </interactant>
    <interactant intactId="EBI-1538980">
        <id>P98168</id>
        <label>ZXDA</label>
    </interactant>
    <organismsDiffer>false</organismsDiffer>
    <experiments>5</experiments>
</comment>
<comment type="subcellular location">
    <subcellularLocation>
        <location evidence="10">Nucleus</location>
    </subcellularLocation>
</comment>
<comment type="alternative products">
    <event type="alternative splicing"/>
    <isoform>
        <id>Q2QGD7-1</id>
        <name>1</name>
        <sequence type="displayed"/>
    </isoform>
    <isoform>
        <id>Q2QGD7-2</id>
        <name>2</name>
        <sequence type="described" ref="VSP_026437 VSP_026438"/>
    </isoform>
    <isoform>
        <id>Q2QGD7-3</id>
        <name>3</name>
        <name>ZXDC2</name>
        <sequence type="described" ref="VSP_047464 VSP_026437 VSP_026438"/>
    </isoform>
</comment>
<comment type="tissue specificity">
    <text evidence="3">Expressed at high levels in heart, kidney, liver and testis, at moderate levels in brain and stomach, and at low levels in lung, muscle, placenta, small intestine and spleen.</text>
</comment>
<comment type="PTM">
    <text evidence="5">Sumoylated at Lys-660 with SUMO1, SUMO2 and SUMO3; sumoylation enhances the activity of the transcriptional activation domain.</text>
</comment>
<comment type="miscellaneous">
    <molecule>Isoform 3</molecule>
    <text evidence="10">Doesn't interact with CIITA. Represses MHC class II transcription possibly via dominant-negative association with isoform 1.</text>
</comment>
<comment type="similarity">
    <text evidence="10">Belongs to the ZXD family.</text>
</comment>
<comment type="sequence caution" evidence="10">
    <conflict type="erroneous initiation">
        <sequence resource="EMBL-CDS" id="BAC03805"/>
    </conflict>
    <text>Truncated N-terminus.</text>
</comment>
<protein>
    <recommendedName>
        <fullName>Zinc finger protein ZXDC</fullName>
    </recommendedName>
    <alternativeName>
        <fullName>ZXD-like zinc finger protein</fullName>
    </alternativeName>
</protein>
<feature type="chain" id="PRO_0000292803" description="Zinc finger protein ZXDC">
    <location>
        <begin position="1"/>
        <end position="858"/>
    </location>
</feature>
<feature type="zinc finger region" description="C2H2-type 1" evidence="1">
    <location>
        <begin position="175"/>
        <end position="199"/>
    </location>
</feature>
<feature type="zinc finger region" description="C2H2-type 2" evidence="1">
    <location>
        <begin position="208"/>
        <end position="232"/>
    </location>
</feature>
<feature type="zinc finger region" description="C2H2-type 3" evidence="1">
    <location>
        <begin position="238"/>
        <end position="262"/>
    </location>
</feature>
<feature type="zinc finger region" description="C2H2-type 4" evidence="1">
    <location>
        <begin position="268"/>
        <end position="290"/>
    </location>
</feature>
<feature type="zinc finger region" description="C2H2-type 5" evidence="1">
    <location>
        <begin position="297"/>
        <end position="321"/>
    </location>
</feature>
<feature type="zinc finger region" description="C2H2-type 6" evidence="1">
    <location>
        <begin position="328"/>
        <end position="352"/>
    </location>
</feature>
<feature type="zinc finger region" description="C2H2-type 7" evidence="1">
    <location>
        <begin position="358"/>
        <end position="382"/>
    </location>
</feature>
<feature type="zinc finger region" description="C2H2-type 8" evidence="1">
    <location>
        <begin position="388"/>
        <end position="412"/>
    </location>
</feature>
<feature type="zinc finger region" description="C2H2-type 9" evidence="1">
    <location>
        <begin position="418"/>
        <end position="442"/>
    </location>
</feature>
<feature type="zinc finger region" description="C2H2-type 10" evidence="1">
    <location>
        <begin position="451"/>
        <end position="476"/>
    </location>
</feature>
<feature type="region of interest" description="Disordered" evidence="2">
    <location>
        <begin position="1"/>
        <end position="127"/>
    </location>
</feature>
<feature type="region of interest" description="Disordered" evidence="2">
    <location>
        <begin position="151"/>
        <end position="174"/>
    </location>
</feature>
<feature type="region of interest" description="Required for transcriptional activation">
    <location>
        <begin position="579"/>
        <end position="688"/>
    </location>
</feature>
<feature type="region of interest" description="Disordered" evidence="2">
    <location>
        <begin position="660"/>
        <end position="696"/>
    </location>
</feature>
<feature type="region of interest" description="Disordered" evidence="2">
    <location>
        <begin position="726"/>
        <end position="756"/>
    </location>
</feature>
<feature type="region of interest" description="Interaction with CIITA">
    <location>
        <begin position="781"/>
        <end position="858"/>
    </location>
</feature>
<feature type="region of interest" description="Disordered" evidence="2">
    <location>
        <begin position="837"/>
        <end position="858"/>
    </location>
</feature>
<feature type="compositionally biased region" description="Low complexity" evidence="2">
    <location>
        <begin position="23"/>
        <end position="35"/>
    </location>
</feature>
<feature type="compositionally biased region" description="Low complexity" evidence="2">
    <location>
        <begin position="84"/>
        <end position="97"/>
    </location>
</feature>
<feature type="compositionally biased region" description="Low complexity" evidence="2">
    <location>
        <begin position="151"/>
        <end position="171"/>
    </location>
</feature>
<feature type="compositionally biased region" description="Polar residues" evidence="2">
    <location>
        <begin position="675"/>
        <end position="687"/>
    </location>
</feature>
<feature type="compositionally biased region" description="Polar residues" evidence="2">
    <location>
        <begin position="847"/>
        <end position="858"/>
    </location>
</feature>
<feature type="modified residue" description="Phosphoserine" evidence="11">
    <location>
        <position position="34"/>
    </location>
</feature>
<feature type="modified residue" description="Phosphothreonine" evidence="11">
    <location>
        <position position="172"/>
    </location>
</feature>
<feature type="modified residue" description="Phosphoserine" evidence="12">
    <location>
        <position position="665"/>
    </location>
</feature>
<feature type="cross-link" description="Glycyl lysine isopeptide (Lys-Gly) (interchain with G-Cter in SUMO)" evidence="5">
    <location>
        <position position="660"/>
    </location>
</feature>
<feature type="splice variant" id="VSP_047464" description="In isoform 3." evidence="9">
    <location>
        <begin position="1"/>
        <end position="258"/>
    </location>
</feature>
<feature type="splice variant" id="VSP_026437" description="In isoform 2 and isoform 3." evidence="7 8 9">
    <original>E</original>
    <variation>V</variation>
    <location>
        <position position="710"/>
    </location>
</feature>
<feature type="splice variant" id="VSP_026438" description="In isoform 2 and isoform 3." evidence="7 8 9">
    <location>
        <begin position="711"/>
        <end position="858"/>
    </location>
</feature>
<feature type="sequence variant" id="VAR_057464" description="In dbSNP:rs16837497." evidence="6">
    <original>P</original>
    <variation>L</variation>
    <location>
        <position position="562"/>
    </location>
</feature>
<feature type="sequence conflict" description="In Ref. 1; AAX23974 and 3; AAZ30918." evidence="10" ref="1 3">
    <original>P</original>
    <variation>A</variation>
    <location>
        <position position="118"/>
    </location>
</feature>
<feature type="sequence conflict" description="In Ref. 5; AAH73859." evidence="10" ref="5">
    <original>Q</original>
    <variation>H</variation>
    <location>
        <position position="683"/>
    </location>
</feature>
<sequence length="858" mass="89988">MDLPALLPAPTARGGQHGGGPGPLRRAPAPLGASPARRRLLLVRGPEDGGPGARPGEASGPSPPPAEDDSDGDSFLVLLEVPHGGAAAEAAGSQEAEPGSRVNLASRPEQGPSGPAAPPGPGVAPAGAVTISSQDLLVRLDRGVLALSAPPGPATAGAAAPRRAPQASGPSTPGYRCPEPQCALAFAKKHQLKVHLLTHGGGQGRRPFKCPLEGCGWAFTTSYKLKRHLQSHDKLRPFGCPVGGCGKKFTTVYNLKAHMKGHEQESLFKCEVCAERFPTHAKLSSHQRSHFEPERPYKCDFPGCEKTFITVSALFSHNRAHFREQELFSCSFPGCSKQYDKACRLKIHLRSHTGERPFICDSDSCGWTFTSMSKLLRHRRKHDDDRRFTCPVEGCGKSFTRAEHLKGHSITHLGTKPFECPVEGCCARFSARSSLYIHSKKHVQDVGAPKSRCPVSTCNRLFTSKHSMKAHMVRQHSRRQDLLPQLEAPSSLTPSSELSSPGQSELTNMDLAALFSDTPANASGSAGGSDEALNSGILTIDVTSVSSSLGGNLPANNSSLGPMEPLVLVAHSDIPPSLDSPLVLGTAATVLQQGSFSVDDVQTVSAGALGCLVALPMKNLSDDPLALTSNSNLAAHITTPTSSSTPRENASVPELLAPIKVEPDSPSRPGAVGQQEGSHGLPQSTLPSPAEQHGAQDTELSAGTGNFYLESGGSARTDYRAIQLAKEKKQRGAGSNAGASQSTQRKIKEGKMSPPHFHASQNSWLCGSLVVPSGGRPGPAPAAGVQCGAQGVQVQLVQDDPSGEGVLPSARGPATFLPFLTVDLPVYVLQEVLPSSGGPAGPEATQFPGSTINLQDLQ</sequence>
<accession>Q2QGD7</accession>
<accession>C5J0H9</accession>
<accession>Q6DKI8</accession>
<accession>Q7L3L1</accession>
<accession>Q8NAU2</accession>
<name>ZXDC_HUMAN</name>
<organism>
    <name type="scientific">Homo sapiens</name>
    <name type="common">Human</name>
    <dbReference type="NCBI Taxonomy" id="9606"/>
    <lineage>
        <taxon>Eukaryota</taxon>
        <taxon>Metazoa</taxon>
        <taxon>Chordata</taxon>
        <taxon>Craniata</taxon>
        <taxon>Vertebrata</taxon>
        <taxon>Euteleostomi</taxon>
        <taxon>Mammalia</taxon>
        <taxon>Eutheria</taxon>
        <taxon>Euarchontoglires</taxon>
        <taxon>Primates</taxon>
        <taxon>Haplorrhini</taxon>
        <taxon>Catarrhini</taxon>
        <taxon>Hominidae</taxon>
        <taxon>Homo</taxon>
    </lineage>
</organism>
<gene>
    <name type="primary">ZXDC</name>
    <name type="synonym">ZXDL</name>
</gene>
<proteinExistence type="evidence at protein level"/>
<reference key="1">
    <citation type="journal article" date="2007" name="Mol. Immunol.">
        <title>ZXDC, a novel zinc finger protein that binds CIITA and activates MHC gene transcription.</title>
        <authorList>
            <person name="Al-Kandari W."/>
            <person name="Jambunathan S."/>
            <person name="Navalgund V."/>
            <person name="Koneni R."/>
            <person name="Freer M."/>
            <person name="Parimi N."/>
            <person name="Mudhasani R."/>
            <person name="Fontes J.D."/>
        </authorList>
    </citation>
    <scope>NUCLEOTIDE SEQUENCE [MRNA] (ISOFORM 1)</scope>
    <scope>FUNCTION</scope>
    <scope>INTERACTION WITH CIITA</scope>
    <scope>TISSUE SPECIFICITY</scope>
</reference>
<reference key="2">
    <citation type="journal article" date="2010" name="Mol. Cell. Biochem.">
        <title>An N- and C-terminal truncated isoform of zinc finger X-linked duplicated C protein represses MHC class II transcription.</title>
        <authorList>
            <person name="Aleksandrova A."/>
            <person name="Galkin O."/>
            <person name="Koneni R."/>
            <person name="Fontes J.D."/>
        </authorList>
    </citation>
    <scope>NUCLEOTIDE SEQUENCE [MRNA] (ISOFORM 3)</scope>
    <scope>VARIANT LEU-562</scope>
</reference>
<reference key="3">
    <citation type="submission" date="2005-05" db="EMBL/GenBank/DDBJ databases">
        <title>Cloning and characterization of the ZXDL gene which encodes a putative zinc finger protein.</title>
        <authorList>
            <person name="Tang W.W."/>
            <person name="Tang Z.H."/>
            <person name="Yu L."/>
        </authorList>
    </citation>
    <scope>NUCLEOTIDE SEQUENCE [MRNA] (ISOFORM 1)</scope>
</reference>
<reference key="4">
    <citation type="journal article" date="2006" name="Nature">
        <title>The DNA sequence, annotation and analysis of human chromosome 3.</title>
        <authorList>
            <person name="Muzny D.M."/>
            <person name="Scherer S.E."/>
            <person name="Kaul R."/>
            <person name="Wang J."/>
            <person name="Yu J."/>
            <person name="Sudbrak R."/>
            <person name="Buhay C.J."/>
            <person name="Chen R."/>
            <person name="Cree A."/>
            <person name="Ding Y."/>
            <person name="Dugan-Rocha S."/>
            <person name="Gill R."/>
            <person name="Gunaratne P."/>
            <person name="Harris R.A."/>
            <person name="Hawes A.C."/>
            <person name="Hernandez J."/>
            <person name="Hodgson A.V."/>
            <person name="Hume J."/>
            <person name="Jackson A."/>
            <person name="Khan Z.M."/>
            <person name="Kovar-Smith C."/>
            <person name="Lewis L.R."/>
            <person name="Lozado R.J."/>
            <person name="Metzker M.L."/>
            <person name="Milosavljevic A."/>
            <person name="Miner G.R."/>
            <person name="Morgan M.B."/>
            <person name="Nazareth L.V."/>
            <person name="Scott G."/>
            <person name="Sodergren E."/>
            <person name="Song X.-Z."/>
            <person name="Steffen D."/>
            <person name="Wei S."/>
            <person name="Wheeler D.A."/>
            <person name="Wright M.W."/>
            <person name="Worley K.C."/>
            <person name="Yuan Y."/>
            <person name="Zhang Z."/>
            <person name="Adams C.Q."/>
            <person name="Ansari-Lari M.A."/>
            <person name="Ayele M."/>
            <person name="Brown M.J."/>
            <person name="Chen G."/>
            <person name="Chen Z."/>
            <person name="Clendenning J."/>
            <person name="Clerc-Blankenburg K.P."/>
            <person name="Chen R."/>
            <person name="Chen Z."/>
            <person name="Davis C."/>
            <person name="Delgado O."/>
            <person name="Dinh H.H."/>
            <person name="Dong W."/>
            <person name="Draper H."/>
            <person name="Ernst S."/>
            <person name="Fu G."/>
            <person name="Gonzalez-Garay M.L."/>
            <person name="Garcia D.K."/>
            <person name="Gillett W."/>
            <person name="Gu J."/>
            <person name="Hao B."/>
            <person name="Haugen E."/>
            <person name="Havlak P."/>
            <person name="He X."/>
            <person name="Hennig S."/>
            <person name="Hu S."/>
            <person name="Huang W."/>
            <person name="Jackson L.R."/>
            <person name="Jacob L.S."/>
            <person name="Kelly S.H."/>
            <person name="Kube M."/>
            <person name="Levy R."/>
            <person name="Li Z."/>
            <person name="Liu B."/>
            <person name="Liu J."/>
            <person name="Liu W."/>
            <person name="Lu J."/>
            <person name="Maheshwari M."/>
            <person name="Nguyen B.-V."/>
            <person name="Okwuonu G.O."/>
            <person name="Palmeiri A."/>
            <person name="Pasternak S."/>
            <person name="Perez L.M."/>
            <person name="Phelps K.A."/>
            <person name="Plopper F.J."/>
            <person name="Qiang B."/>
            <person name="Raymond C."/>
            <person name="Rodriguez R."/>
            <person name="Saenphimmachak C."/>
            <person name="Santibanez J."/>
            <person name="Shen H."/>
            <person name="Shen Y."/>
            <person name="Subramanian S."/>
            <person name="Tabor P.E."/>
            <person name="Verduzco D."/>
            <person name="Waldron L."/>
            <person name="Wang J."/>
            <person name="Wang J."/>
            <person name="Wang Q."/>
            <person name="Williams G.A."/>
            <person name="Wong G.K.-S."/>
            <person name="Yao Z."/>
            <person name="Zhang J."/>
            <person name="Zhang X."/>
            <person name="Zhao G."/>
            <person name="Zhou J."/>
            <person name="Zhou Y."/>
            <person name="Nelson D."/>
            <person name="Lehrach H."/>
            <person name="Reinhardt R."/>
            <person name="Naylor S.L."/>
            <person name="Yang H."/>
            <person name="Olson M."/>
            <person name="Weinstock G."/>
            <person name="Gibbs R.A."/>
        </authorList>
    </citation>
    <scope>NUCLEOTIDE SEQUENCE [LARGE SCALE GENOMIC DNA]</scope>
</reference>
<reference key="5">
    <citation type="journal article" date="2004" name="Nat. Genet.">
        <title>Complete sequencing and characterization of 21,243 full-length human cDNAs.</title>
        <authorList>
            <person name="Ota T."/>
            <person name="Suzuki Y."/>
            <person name="Nishikawa T."/>
            <person name="Otsuki T."/>
            <person name="Sugiyama T."/>
            <person name="Irie R."/>
            <person name="Wakamatsu A."/>
            <person name="Hayashi K."/>
            <person name="Sato H."/>
            <person name="Nagai K."/>
            <person name="Kimura K."/>
            <person name="Makita H."/>
            <person name="Sekine M."/>
            <person name="Obayashi M."/>
            <person name="Nishi T."/>
            <person name="Shibahara T."/>
            <person name="Tanaka T."/>
            <person name="Ishii S."/>
            <person name="Yamamoto J."/>
            <person name="Saito K."/>
            <person name="Kawai Y."/>
            <person name="Isono Y."/>
            <person name="Nakamura Y."/>
            <person name="Nagahari K."/>
            <person name="Murakami K."/>
            <person name="Yasuda T."/>
            <person name="Iwayanagi T."/>
            <person name="Wagatsuma M."/>
            <person name="Shiratori A."/>
            <person name="Sudo H."/>
            <person name="Hosoiri T."/>
            <person name="Kaku Y."/>
            <person name="Kodaira H."/>
            <person name="Kondo H."/>
            <person name="Sugawara M."/>
            <person name="Takahashi M."/>
            <person name="Kanda K."/>
            <person name="Yokoi T."/>
            <person name="Furuya T."/>
            <person name="Kikkawa E."/>
            <person name="Omura Y."/>
            <person name="Abe K."/>
            <person name="Kamihara K."/>
            <person name="Katsuta N."/>
            <person name="Sato K."/>
            <person name="Tanikawa M."/>
            <person name="Yamazaki M."/>
            <person name="Ninomiya K."/>
            <person name="Ishibashi T."/>
            <person name="Yamashita H."/>
            <person name="Murakawa K."/>
            <person name="Fujimori K."/>
            <person name="Tanai H."/>
            <person name="Kimata M."/>
            <person name="Watanabe M."/>
            <person name="Hiraoka S."/>
            <person name="Chiba Y."/>
            <person name="Ishida S."/>
            <person name="Ono Y."/>
            <person name="Takiguchi S."/>
            <person name="Watanabe S."/>
            <person name="Yosida M."/>
            <person name="Hotuta T."/>
            <person name="Kusano J."/>
            <person name="Kanehori K."/>
            <person name="Takahashi-Fujii A."/>
            <person name="Hara H."/>
            <person name="Tanase T.-O."/>
            <person name="Nomura Y."/>
            <person name="Togiya S."/>
            <person name="Komai F."/>
            <person name="Hara R."/>
            <person name="Takeuchi K."/>
            <person name="Arita M."/>
            <person name="Imose N."/>
            <person name="Musashino K."/>
            <person name="Yuuki H."/>
            <person name="Oshima A."/>
            <person name="Sasaki N."/>
            <person name="Aotsuka S."/>
            <person name="Yoshikawa Y."/>
            <person name="Matsunawa H."/>
            <person name="Ichihara T."/>
            <person name="Shiohata N."/>
            <person name="Sano S."/>
            <person name="Moriya S."/>
            <person name="Momiyama H."/>
            <person name="Satoh N."/>
            <person name="Takami S."/>
            <person name="Terashima Y."/>
            <person name="Suzuki O."/>
            <person name="Nakagawa S."/>
            <person name="Senoh A."/>
            <person name="Mizoguchi H."/>
            <person name="Goto Y."/>
            <person name="Shimizu F."/>
            <person name="Wakebe H."/>
            <person name="Hishigaki H."/>
            <person name="Watanabe T."/>
            <person name="Sugiyama A."/>
            <person name="Takemoto M."/>
            <person name="Kawakami B."/>
            <person name="Yamazaki M."/>
            <person name="Watanabe K."/>
            <person name="Kumagai A."/>
            <person name="Itakura S."/>
            <person name="Fukuzumi Y."/>
            <person name="Fujimori Y."/>
            <person name="Komiyama M."/>
            <person name="Tashiro H."/>
            <person name="Tanigami A."/>
            <person name="Fujiwara T."/>
            <person name="Ono T."/>
            <person name="Yamada K."/>
            <person name="Fujii Y."/>
            <person name="Ozaki K."/>
            <person name="Hirao M."/>
            <person name="Ohmori Y."/>
            <person name="Kawabata A."/>
            <person name="Hikiji T."/>
            <person name="Kobatake N."/>
            <person name="Inagaki H."/>
            <person name="Ikema Y."/>
            <person name="Okamoto S."/>
            <person name="Okitani R."/>
            <person name="Kawakami T."/>
            <person name="Noguchi S."/>
            <person name="Itoh T."/>
            <person name="Shigeta K."/>
            <person name="Senba T."/>
            <person name="Matsumura K."/>
            <person name="Nakajima Y."/>
            <person name="Mizuno T."/>
            <person name="Morinaga M."/>
            <person name="Sasaki M."/>
            <person name="Togashi T."/>
            <person name="Oyama M."/>
            <person name="Hata H."/>
            <person name="Watanabe M."/>
            <person name="Komatsu T."/>
            <person name="Mizushima-Sugano J."/>
            <person name="Satoh T."/>
            <person name="Shirai Y."/>
            <person name="Takahashi Y."/>
            <person name="Nakagawa K."/>
            <person name="Okumura K."/>
            <person name="Nagase T."/>
            <person name="Nomura N."/>
            <person name="Kikuchi H."/>
            <person name="Masuho Y."/>
            <person name="Yamashita R."/>
            <person name="Nakai K."/>
            <person name="Yada T."/>
            <person name="Nakamura Y."/>
            <person name="Ohara O."/>
            <person name="Isogai T."/>
            <person name="Sugano S."/>
        </authorList>
    </citation>
    <scope>NUCLEOTIDE SEQUENCE [LARGE SCALE MRNA] OF 196-858 (ISOFORM 2)</scope>
    <source>
        <tissue>Teratocarcinoma</tissue>
    </source>
</reference>
<reference key="6">
    <citation type="journal article" date="2004" name="Genome Res.">
        <title>The status, quality, and expansion of the NIH full-length cDNA project: the Mammalian Gene Collection (MGC).</title>
        <authorList>
            <consortium name="The MGC Project Team"/>
        </authorList>
    </citation>
    <scope>NUCLEOTIDE SEQUENCE [LARGE SCALE MRNA] OF 337-858 (ISOFORM 1)</scope>
    <scope>NUCLEOTIDE SEQUENCE [LARGE SCALE MRNA] OF 373-710 (ISOFORM 2)</scope>
    <source>
        <tissue>Placenta</tissue>
        <tissue>Skin</tissue>
        <tissue>Testis</tissue>
    </source>
</reference>
<reference key="7">
    <citation type="journal article" date="2007" name="Biol. Chem.">
        <title>Sumoylation of the zinc finger protein ZXDC enhances the function of its transcriptional activation domain.</title>
        <authorList>
            <person name="Jambunathan S."/>
            <person name="Fontes J.D."/>
        </authorList>
    </citation>
    <scope>SUMOYLATION AT LYS-660</scope>
    <scope>FUNCTION</scope>
</reference>
<reference key="8">
    <citation type="journal article" date="2007" name="J. Mol. Biol.">
        <title>The zinc finger proteins ZXDA and ZXDC form a complex that binds CIITA and regulates MHC II gene transcription.</title>
        <authorList>
            <person name="Al-Kandari W."/>
            <person name="Koneni R."/>
            <person name="Navalgund V."/>
            <person name="Aleksandrova A."/>
            <person name="Jambunathan S."/>
            <person name="Fontes J.D."/>
        </authorList>
    </citation>
    <scope>FUNCTION</scope>
    <scope>SELF-ASSOCIATION</scope>
    <scope>INTERACTION WITH ZXDA AND CIITA</scope>
</reference>
<reference key="9">
    <citation type="journal article" date="2013" name="J. Proteome Res.">
        <title>Toward a comprehensive characterization of a human cancer cell phosphoproteome.</title>
        <authorList>
            <person name="Zhou H."/>
            <person name="Di Palma S."/>
            <person name="Preisinger C."/>
            <person name="Peng M."/>
            <person name="Polat A.N."/>
            <person name="Heck A.J."/>
            <person name="Mohammed S."/>
        </authorList>
    </citation>
    <scope>PHOSPHORYLATION [LARGE SCALE ANALYSIS] AT SER-34 AND THR-172</scope>
    <scope>IDENTIFICATION BY MASS SPECTROMETRY [LARGE SCALE ANALYSIS]</scope>
    <source>
        <tissue>Cervix carcinoma</tissue>
    </source>
</reference>
<reference key="10">
    <citation type="journal article" date="2014" name="J. Proteomics">
        <title>An enzyme assisted RP-RPLC approach for in-depth analysis of human liver phosphoproteome.</title>
        <authorList>
            <person name="Bian Y."/>
            <person name="Song C."/>
            <person name="Cheng K."/>
            <person name="Dong M."/>
            <person name="Wang F."/>
            <person name="Huang J."/>
            <person name="Sun D."/>
            <person name="Wang L."/>
            <person name="Ye M."/>
            <person name="Zou H."/>
        </authorList>
    </citation>
    <scope>PHOSPHORYLATION [LARGE SCALE ANALYSIS] AT SER-665</scope>
    <scope>IDENTIFICATION BY MASS SPECTROMETRY [LARGE SCALE ANALYSIS]</scope>
    <source>
        <tissue>Liver</tissue>
    </source>
</reference>